<accession>A3CSU7</accession>
<keyword id="KW-0169">Cobalamin biosynthesis</keyword>
<keyword id="KW-0489">Methyltransferase</keyword>
<keyword id="KW-0949">S-adenosyl-L-methionine</keyword>
<keyword id="KW-0808">Transferase</keyword>
<gene>
    <name evidence="1" type="primary">cbiD</name>
    <name type="ordered locus">Memar_0514</name>
</gene>
<reference key="1">
    <citation type="journal article" date="2009" name="Stand. Genomic Sci.">
        <title>Complete genome sequence of Methanoculleus marisnigri Romesser et al. 1981 type strain JR1.</title>
        <authorList>
            <person name="Anderson I.J."/>
            <person name="Sieprawska-Lupa M."/>
            <person name="Lapidus A."/>
            <person name="Nolan M."/>
            <person name="Copeland A."/>
            <person name="Glavina Del Rio T."/>
            <person name="Tice H."/>
            <person name="Dalin E."/>
            <person name="Barry K."/>
            <person name="Saunders E."/>
            <person name="Han C."/>
            <person name="Brettin T."/>
            <person name="Detter J.C."/>
            <person name="Bruce D."/>
            <person name="Mikhailova N."/>
            <person name="Pitluck S."/>
            <person name="Hauser L."/>
            <person name="Land M."/>
            <person name="Lucas S."/>
            <person name="Richardson P."/>
            <person name="Whitman W.B."/>
            <person name="Kyrpides N.C."/>
        </authorList>
    </citation>
    <scope>NUCLEOTIDE SEQUENCE [LARGE SCALE GENOMIC DNA]</scope>
    <source>
        <strain>ATCC 35101 / DSM 1498 / JR1</strain>
    </source>
</reference>
<name>CBID_METMJ</name>
<proteinExistence type="inferred from homology"/>
<sequence length="337" mass="35742">MRDPVTDFEYPAAWVAACRSPDLLDDVRRGLAVLTASGTVLRRGFSTGTTAAAACKAAILSLACDTVREVDVTLPCGIAVRLAVDGYRGQASCRKDAGDYTADVTGGLEFVAMAAPSLSGGVQFVPGEGIGSFARDTPRHRRGTPAISAPALDCIRRSIDEAVEEADLSGTTVILTIPRGAEVAQKTLNPRVGVHGGISVLGTTGFVEPWDDHMTEGVIDRIARAPGAVVLTTGRLGLRYSRLLFPEHEAILVGNKLEEALRAVEGDAVICGLPGLILKFMNPDVLSGTGCVTVEELSATPLWEETVRRELAAFRARYPRVRVVIVDRDGRIIGEPP</sequence>
<evidence type="ECO:0000255" key="1">
    <source>
        <dbReference type="HAMAP-Rule" id="MF_00787"/>
    </source>
</evidence>
<comment type="function">
    <text evidence="1">Catalyzes the methylation of C-1 in cobalt-precorrin-5B to form cobalt-precorrin-6A.</text>
</comment>
<comment type="catalytic activity">
    <reaction evidence="1">
        <text>Co-precorrin-5B + S-adenosyl-L-methionine = Co-precorrin-6A + S-adenosyl-L-homocysteine</text>
        <dbReference type="Rhea" id="RHEA:26285"/>
        <dbReference type="ChEBI" id="CHEBI:57856"/>
        <dbReference type="ChEBI" id="CHEBI:59789"/>
        <dbReference type="ChEBI" id="CHEBI:60063"/>
        <dbReference type="ChEBI" id="CHEBI:60064"/>
        <dbReference type="EC" id="2.1.1.195"/>
    </reaction>
</comment>
<comment type="pathway">
    <text evidence="1">Cofactor biosynthesis; adenosylcobalamin biosynthesis; cob(II)yrinate a,c-diamide from sirohydrochlorin (anaerobic route): step 6/10.</text>
</comment>
<comment type="similarity">
    <text evidence="1">Belongs to the CbiD family.</text>
</comment>
<protein>
    <recommendedName>
        <fullName evidence="1">Cobalt-precorrin-5B C(1)-methyltransferase</fullName>
        <ecNumber evidence="1">2.1.1.195</ecNumber>
    </recommendedName>
    <alternativeName>
        <fullName evidence="1">Cobalt-precorrin-6A synthase</fullName>
    </alternativeName>
</protein>
<organism>
    <name type="scientific">Methanoculleus marisnigri (strain ATCC 35101 / DSM 1498 / JR1)</name>
    <dbReference type="NCBI Taxonomy" id="368407"/>
    <lineage>
        <taxon>Archaea</taxon>
        <taxon>Methanobacteriati</taxon>
        <taxon>Methanobacteriota</taxon>
        <taxon>Stenosarchaea group</taxon>
        <taxon>Methanomicrobia</taxon>
        <taxon>Methanomicrobiales</taxon>
        <taxon>Methanomicrobiaceae</taxon>
        <taxon>Methanoculleus</taxon>
    </lineage>
</organism>
<feature type="chain" id="PRO_1000046866" description="Cobalt-precorrin-5B C(1)-methyltransferase">
    <location>
        <begin position="1"/>
        <end position="337"/>
    </location>
</feature>
<dbReference type="EC" id="2.1.1.195" evidence="1"/>
<dbReference type="EMBL" id="CP000562">
    <property type="protein sequence ID" value="ABN56447.1"/>
    <property type="molecule type" value="Genomic_DNA"/>
</dbReference>
<dbReference type="RefSeq" id="WP_011843357.1">
    <property type="nucleotide sequence ID" value="NC_009051.1"/>
</dbReference>
<dbReference type="SMR" id="A3CSU7"/>
<dbReference type="STRING" id="368407.Memar_0514"/>
<dbReference type="GeneID" id="4846013"/>
<dbReference type="KEGG" id="mem:Memar_0514"/>
<dbReference type="eggNOG" id="arCOG04383">
    <property type="taxonomic scope" value="Archaea"/>
</dbReference>
<dbReference type="HOGENOM" id="CLU_820433_0_0_2"/>
<dbReference type="OrthoDB" id="10423at2157"/>
<dbReference type="UniPathway" id="UPA00148">
    <property type="reaction ID" value="UER00227"/>
</dbReference>
<dbReference type="Proteomes" id="UP000002146">
    <property type="component" value="Chromosome"/>
</dbReference>
<dbReference type="GO" id="GO:0043780">
    <property type="term" value="F:cobalt-precorrin-5B C1-methyltransferase activity"/>
    <property type="evidence" value="ECO:0007669"/>
    <property type="project" value="RHEA"/>
</dbReference>
<dbReference type="GO" id="GO:0019251">
    <property type="term" value="P:anaerobic cobalamin biosynthetic process"/>
    <property type="evidence" value="ECO:0007669"/>
    <property type="project" value="UniProtKB-UniRule"/>
</dbReference>
<dbReference type="GO" id="GO:0032259">
    <property type="term" value="P:methylation"/>
    <property type="evidence" value="ECO:0007669"/>
    <property type="project" value="UniProtKB-KW"/>
</dbReference>
<dbReference type="Gene3D" id="3.30.2110.10">
    <property type="entry name" value="CbiD-like"/>
    <property type="match status" value="1"/>
</dbReference>
<dbReference type="Gene3D" id="3.40.50.10720">
    <property type="entry name" value="CbiD-like domains"/>
    <property type="match status" value="1"/>
</dbReference>
<dbReference type="HAMAP" id="MF_00787">
    <property type="entry name" value="CbiD"/>
    <property type="match status" value="1"/>
</dbReference>
<dbReference type="InterPro" id="IPR002748">
    <property type="entry name" value="CbiD"/>
</dbReference>
<dbReference type="InterPro" id="IPR036074">
    <property type="entry name" value="CbiD_sf"/>
</dbReference>
<dbReference type="NCBIfam" id="NF000856">
    <property type="entry name" value="PRK00075.2-5"/>
    <property type="match status" value="1"/>
</dbReference>
<dbReference type="PANTHER" id="PTHR35863">
    <property type="entry name" value="COBALT-PRECORRIN-5B C(1)-METHYLTRANSFERASE"/>
    <property type="match status" value="1"/>
</dbReference>
<dbReference type="PANTHER" id="PTHR35863:SF1">
    <property type="entry name" value="COBALT-PRECORRIN-5B C(1)-METHYLTRANSFERASE"/>
    <property type="match status" value="1"/>
</dbReference>
<dbReference type="Pfam" id="PF01888">
    <property type="entry name" value="CbiD"/>
    <property type="match status" value="1"/>
</dbReference>
<dbReference type="SUPFAM" id="SSF111342">
    <property type="entry name" value="CbiD-like"/>
    <property type="match status" value="1"/>
</dbReference>